<feature type="chain" id="PRO_0000174511" description="S-adenosylmethionine synthase">
    <location>
        <begin position="1"/>
        <end position="410"/>
    </location>
</feature>
<feature type="region of interest" description="Flexible loop" evidence="1">
    <location>
        <begin position="105"/>
        <end position="115"/>
    </location>
</feature>
<feature type="region of interest" description="Disordered" evidence="2">
    <location>
        <begin position="107"/>
        <end position="133"/>
    </location>
</feature>
<feature type="binding site" description="in other chain" evidence="1">
    <location>
        <position position="21"/>
    </location>
    <ligand>
        <name>ATP</name>
        <dbReference type="ChEBI" id="CHEBI:30616"/>
        <note>ligand shared between two neighboring subunits</note>
    </ligand>
</feature>
<feature type="binding site" evidence="1">
    <location>
        <position position="23"/>
    </location>
    <ligand>
        <name>Mg(2+)</name>
        <dbReference type="ChEBI" id="CHEBI:18420"/>
    </ligand>
</feature>
<feature type="binding site" evidence="1">
    <location>
        <position position="49"/>
    </location>
    <ligand>
        <name>K(+)</name>
        <dbReference type="ChEBI" id="CHEBI:29103"/>
    </ligand>
</feature>
<feature type="binding site" description="in other chain" evidence="1">
    <location>
        <position position="62"/>
    </location>
    <ligand>
        <name>L-methionine</name>
        <dbReference type="ChEBI" id="CHEBI:57844"/>
        <note>ligand shared between two neighboring subunits</note>
    </ligand>
</feature>
<feature type="binding site" description="in other chain" evidence="1">
    <location>
        <position position="105"/>
    </location>
    <ligand>
        <name>L-methionine</name>
        <dbReference type="ChEBI" id="CHEBI:57844"/>
        <note>ligand shared between two neighboring subunits</note>
    </ligand>
</feature>
<feature type="binding site" description="in other chain" evidence="1">
    <location>
        <begin position="180"/>
        <end position="182"/>
    </location>
    <ligand>
        <name>ATP</name>
        <dbReference type="ChEBI" id="CHEBI:30616"/>
        <note>ligand shared between two neighboring subunits</note>
    </ligand>
</feature>
<feature type="binding site" evidence="1">
    <location>
        <position position="261"/>
    </location>
    <ligand>
        <name>ATP</name>
        <dbReference type="ChEBI" id="CHEBI:30616"/>
        <note>ligand shared between two neighboring subunits</note>
    </ligand>
</feature>
<feature type="binding site" evidence="1">
    <location>
        <position position="261"/>
    </location>
    <ligand>
        <name>L-methionine</name>
        <dbReference type="ChEBI" id="CHEBI:57844"/>
        <note>ligand shared between two neighboring subunits</note>
    </ligand>
</feature>
<feature type="binding site" description="in other chain" evidence="1">
    <location>
        <begin position="267"/>
        <end position="268"/>
    </location>
    <ligand>
        <name>ATP</name>
        <dbReference type="ChEBI" id="CHEBI:30616"/>
        <note>ligand shared between two neighboring subunits</note>
    </ligand>
</feature>
<feature type="binding site" evidence="1">
    <location>
        <position position="284"/>
    </location>
    <ligand>
        <name>ATP</name>
        <dbReference type="ChEBI" id="CHEBI:30616"/>
        <note>ligand shared between two neighboring subunits</note>
    </ligand>
</feature>
<feature type="binding site" evidence="1">
    <location>
        <position position="288"/>
    </location>
    <ligand>
        <name>ATP</name>
        <dbReference type="ChEBI" id="CHEBI:30616"/>
        <note>ligand shared between two neighboring subunits</note>
    </ligand>
</feature>
<feature type="binding site" description="in other chain" evidence="1">
    <location>
        <position position="292"/>
    </location>
    <ligand>
        <name>L-methionine</name>
        <dbReference type="ChEBI" id="CHEBI:57844"/>
        <note>ligand shared between two neighboring subunits</note>
    </ligand>
</feature>
<protein>
    <recommendedName>
        <fullName evidence="1">S-adenosylmethionine synthase</fullName>
        <shortName evidence="1">AdoMet synthase</shortName>
        <ecNumber evidence="1">2.5.1.6</ecNumber>
    </recommendedName>
    <alternativeName>
        <fullName evidence="1">MAT</fullName>
    </alternativeName>
    <alternativeName>
        <fullName evidence="1">Methionine adenosyltransferase</fullName>
    </alternativeName>
</protein>
<proteinExistence type="inferred from homology"/>
<name>METK_CORDI</name>
<comment type="function">
    <text evidence="1">Catalyzes the formation of S-adenosylmethionine (AdoMet) from methionine and ATP. The overall synthetic reaction is composed of two sequential steps, AdoMet formation and the subsequent tripolyphosphate hydrolysis which occurs prior to release of AdoMet from the enzyme.</text>
</comment>
<comment type="catalytic activity">
    <reaction evidence="1">
        <text>L-methionine + ATP + H2O = S-adenosyl-L-methionine + phosphate + diphosphate</text>
        <dbReference type="Rhea" id="RHEA:21080"/>
        <dbReference type="ChEBI" id="CHEBI:15377"/>
        <dbReference type="ChEBI" id="CHEBI:30616"/>
        <dbReference type="ChEBI" id="CHEBI:33019"/>
        <dbReference type="ChEBI" id="CHEBI:43474"/>
        <dbReference type="ChEBI" id="CHEBI:57844"/>
        <dbReference type="ChEBI" id="CHEBI:59789"/>
        <dbReference type="EC" id="2.5.1.6"/>
    </reaction>
</comment>
<comment type="cofactor">
    <cofactor evidence="1">
        <name>Mg(2+)</name>
        <dbReference type="ChEBI" id="CHEBI:18420"/>
    </cofactor>
    <text evidence="1">Binds 2 divalent ions per subunit.</text>
</comment>
<comment type="cofactor">
    <cofactor evidence="1">
        <name>K(+)</name>
        <dbReference type="ChEBI" id="CHEBI:29103"/>
    </cofactor>
    <text evidence="1">Binds 1 potassium ion per subunit.</text>
</comment>
<comment type="pathway">
    <text evidence="1">Amino-acid biosynthesis; S-adenosyl-L-methionine biosynthesis; S-adenosyl-L-methionine from L-methionine: step 1/1.</text>
</comment>
<comment type="subunit">
    <text evidence="1">Homotetramer; dimer of dimers.</text>
</comment>
<comment type="subcellular location">
    <subcellularLocation>
        <location evidence="1">Cytoplasm</location>
    </subcellularLocation>
</comment>
<comment type="similarity">
    <text evidence="1">Belongs to the AdoMet synthase family.</text>
</comment>
<organism>
    <name type="scientific">Corynebacterium diphtheriae (strain ATCC 700971 / NCTC 13129 / Biotype gravis)</name>
    <dbReference type="NCBI Taxonomy" id="257309"/>
    <lineage>
        <taxon>Bacteria</taxon>
        <taxon>Bacillati</taxon>
        <taxon>Actinomycetota</taxon>
        <taxon>Actinomycetes</taxon>
        <taxon>Mycobacteriales</taxon>
        <taxon>Corynebacteriaceae</taxon>
        <taxon>Corynebacterium</taxon>
    </lineage>
</organism>
<accession>P61945</accession>
<keyword id="KW-0067">ATP-binding</keyword>
<keyword id="KW-0963">Cytoplasm</keyword>
<keyword id="KW-0460">Magnesium</keyword>
<keyword id="KW-0479">Metal-binding</keyword>
<keyword id="KW-0547">Nucleotide-binding</keyword>
<keyword id="KW-0554">One-carbon metabolism</keyword>
<keyword id="KW-0630">Potassium</keyword>
<keyword id="KW-1185">Reference proteome</keyword>
<keyword id="KW-0808">Transferase</keyword>
<gene>
    <name evidence="1" type="primary">metK</name>
    <name type="ordered locus">DIP1325</name>
</gene>
<sequence length="410" mass="44014">MSETAASGLRLFTSESVTEGHPDKICDAISDTILDALLSVDPHARVAVETVTTTGLVHVVGEVRTSGYVEIPKLVRDKLIEIGFNSSEVGFDGRTCGVSVSIGEQSQEIGAGVDQSHEVRSGENTDADDQAGAGDQGLMFGYATNETATLMPLPIDLAHRLARRLTQVRKTSVVSHLRPDGKTQVTLAYDESGRPVRLDTVVVSTQHDPDVTQEWLFAQIKEHVVDWVLRDSGLESTLDISGYSLLVNPSGSFVVGGPMGDAGLTGRKIIVDTYGGMARHGGGAFSGKDPSKVDRSGAYAMRWVAKNIVAAGLADRAEVQVAYAIGRAKPVGLYVETFGTAKFGLTDEQIQDAVLHVFDLRPAAIIRELDLLRPIYAGTAAYGHFGRDDLKLPWENTDRAEQLRDVLSLG</sequence>
<evidence type="ECO:0000255" key="1">
    <source>
        <dbReference type="HAMAP-Rule" id="MF_00086"/>
    </source>
</evidence>
<evidence type="ECO:0000256" key="2">
    <source>
        <dbReference type="SAM" id="MobiDB-lite"/>
    </source>
</evidence>
<dbReference type="EC" id="2.5.1.6" evidence="1"/>
<dbReference type="EMBL" id="BX248357">
    <property type="protein sequence ID" value="CAE49853.1"/>
    <property type="molecule type" value="Genomic_DNA"/>
</dbReference>
<dbReference type="RefSeq" id="WP_003851628.1">
    <property type="nucleotide sequence ID" value="NC_002935.2"/>
</dbReference>
<dbReference type="SMR" id="P61945"/>
<dbReference type="STRING" id="257309.DIP1325"/>
<dbReference type="KEGG" id="cdi:DIP1325"/>
<dbReference type="HOGENOM" id="CLU_041802_1_1_11"/>
<dbReference type="UniPathway" id="UPA00315">
    <property type="reaction ID" value="UER00080"/>
</dbReference>
<dbReference type="Proteomes" id="UP000002198">
    <property type="component" value="Chromosome"/>
</dbReference>
<dbReference type="GO" id="GO:0005737">
    <property type="term" value="C:cytoplasm"/>
    <property type="evidence" value="ECO:0007669"/>
    <property type="project" value="UniProtKB-SubCell"/>
</dbReference>
<dbReference type="GO" id="GO:0005524">
    <property type="term" value="F:ATP binding"/>
    <property type="evidence" value="ECO:0007669"/>
    <property type="project" value="UniProtKB-UniRule"/>
</dbReference>
<dbReference type="GO" id="GO:0000287">
    <property type="term" value="F:magnesium ion binding"/>
    <property type="evidence" value="ECO:0007669"/>
    <property type="project" value="UniProtKB-UniRule"/>
</dbReference>
<dbReference type="GO" id="GO:0004478">
    <property type="term" value="F:methionine adenosyltransferase activity"/>
    <property type="evidence" value="ECO:0007669"/>
    <property type="project" value="UniProtKB-UniRule"/>
</dbReference>
<dbReference type="GO" id="GO:0006730">
    <property type="term" value="P:one-carbon metabolic process"/>
    <property type="evidence" value="ECO:0007669"/>
    <property type="project" value="UniProtKB-KW"/>
</dbReference>
<dbReference type="GO" id="GO:0006556">
    <property type="term" value="P:S-adenosylmethionine biosynthetic process"/>
    <property type="evidence" value="ECO:0007669"/>
    <property type="project" value="UniProtKB-UniRule"/>
</dbReference>
<dbReference type="CDD" id="cd18079">
    <property type="entry name" value="S-AdoMet_synt"/>
    <property type="match status" value="1"/>
</dbReference>
<dbReference type="FunFam" id="3.30.300.10:FF:000003">
    <property type="entry name" value="S-adenosylmethionine synthase"/>
    <property type="match status" value="1"/>
</dbReference>
<dbReference type="Gene3D" id="3.30.300.10">
    <property type="match status" value="3"/>
</dbReference>
<dbReference type="HAMAP" id="MF_00086">
    <property type="entry name" value="S_AdoMet_synth1"/>
    <property type="match status" value="1"/>
</dbReference>
<dbReference type="InterPro" id="IPR022631">
    <property type="entry name" value="ADOMET_SYNTHASE_CS"/>
</dbReference>
<dbReference type="InterPro" id="IPR022630">
    <property type="entry name" value="S-AdoMet_synt_C"/>
</dbReference>
<dbReference type="InterPro" id="IPR022629">
    <property type="entry name" value="S-AdoMet_synt_central"/>
</dbReference>
<dbReference type="InterPro" id="IPR022628">
    <property type="entry name" value="S-AdoMet_synt_N"/>
</dbReference>
<dbReference type="InterPro" id="IPR002133">
    <property type="entry name" value="S-AdoMet_synthetase"/>
</dbReference>
<dbReference type="InterPro" id="IPR022636">
    <property type="entry name" value="S-AdoMet_synthetase_sfam"/>
</dbReference>
<dbReference type="NCBIfam" id="TIGR01034">
    <property type="entry name" value="metK"/>
    <property type="match status" value="1"/>
</dbReference>
<dbReference type="PANTHER" id="PTHR11964">
    <property type="entry name" value="S-ADENOSYLMETHIONINE SYNTHETASE"/>
    <property type="match status" value="1"/>
</dbReference>
<dbReference type="Pfam" id="PF02773">
    <property type="entry name" value="S-AdoMet_synt_C"/>
    <property type="match status" value="1"/>
</dbReference>
<dbReference type="Pfam" id="PF02772">
    <property type="entry name" value="S-AdoMet_synt_M"/>
    <property type="match status" value="1"/>
</dbReference>
<dbReference type="Pfam" id="PF00438">
    <property type="entry name" value="S-AdoMet_synt_N"/>
    <property type="match status" value="1"/>
</dbReference>
<dbReference type="PIRSF" id="PIRSF000497">
    <property type="entry name" value="MAT"/>
    <property type="match status" value="1"/>
</dbReference>
<dbReference type="SUPFAM" id="SSF55973">
    <property type="entry name" value="S-adenosylmethionine synthetase"/>
    <property type="match status" value="3"/>
</dbReference>
<dbReference type="PROSITE" id="PS00376">
    <property type="entry name" value="ADOMET_SYNTHASE_1"/>
    <property type="match status" value="1"/>
</dbReference>
<dbReference type="PROSITE" id="PS00377">
    <property type="entry name" value="ADOMET_SYNTHASE_2"/>
    <property type="match status" value="1"/>
</dbReference>
<reference key="1">
    <citation type="journal article" date="2003" name="Nucleic Acids Res.">
        <title>The complete genome sequence and analysis of Corynebacterium diphtheriae NCTC13129.</title>
        <authorList>
            <person name="Cerdeno-Tarraga A.-M."/>
            <person name="Efstratiou A."/>
            <person name="Dover L.G."/>
            <person name="Holden M.T.G."/>
            <person name="Pallen M.J."/>
            <person name="Bentley S.D."/>
            <person name="Besra G.S."/>
            <person name="Churcher C.M."/>
            <person name="James K.D."/>
            <person name="De Zoysa A."/>
            <person name="Chillingworth T."/>
            <person name="Cronin A."/>
            <person name="Dowd L."/>
            <person name="Feltwell T."/>
            <person name="Hamlin N."/>
            <person name="Holroyd S."/>
            <person name="Jagels K."/>
            <person name="Moule S."/>
            <person name="Quail M.A."/>
            <person name="Rabbinowitsch E."/>
            <person name="Rutherford K.M."/>
            <person name="Thomson N.R."/>
            <person name="Unwin L."/>
            <person name="Whitehead S."/>
            <person name="Barrell B.G."/>
            <person name="Parkhill J."/>
        </authorList>
    </citation>
    <scope>NUCLEOTIDE SEQUENCE [LARGE SCALE GENOMIC DNA]</scope>
    <source>
        <strain>ATCC 700971 / NCTC 13129 / Biotype gravis</strain>
    </source>
</reference>